<gene>
    <name type="ordered locus">BG0249</name>
</gene>
<proteinExistence type="inferred from homology"/>
<accession>Q662B8</accession>
<comment type="function">
    <text evidence="1">Pyrophosphatase that catalyzes the hydrolysis of nucleoside triphosphates to their monophosphate derivatives, with a high preference for the non-canonical purine nucleotides XTP (xanthosine triphosphate), dITP (deoxyinosine triphosphate) and ITP. Seems to function as a house-cleaning enzyme that removes non-canonical purine nucleotides from the nucleotide pool, thus preventing their incorporation into DNA/RNA and avoiding chromosomal lesions.</text>
</comment>
<comment type="catalytic activity">
    <reaction evidence="1">
        <text>XTP + H2O = XMP + diphosphate + H(+)</text>
        <dbReference type="Rhea" id="RHEA:28610"/>
        <dbReference type="ChEBI" id="CHEBI:15377"/>
        <dbReference type="ChEBI" id="CHEBI:15378"/>
        <dbReference type="ChEBI" id="CHEBI:33019"/>
        <dbReference type="ChEBI" id="CHEBI:57464"/>
        <dbReference type="ChEBI" id="CHEBI:61314"/>
        <dbReference type="EC" id="3.6.1.66"/>
    </reaction>
</comment>
<comment type="catalytic activity">
    <reaction evidence="1">
        <text>dITP + H2O = dIMP + diphosphate + H(+)</text>
        <dbReference type="Rhea" id="RHEA:28342"/>
        <dbReference type="ChEBI" id="CHEBI:15377"/>
        <dbReference type="ChEBI" id="CHEBI:15378"/>
        <dbReference type="ChEBI" id="CHEBI:33019"/>
        <dbReference type="ChEBI" id="CHEBI:61194"/>
        <dbReference type="ChEBI" id="CHEBI:61382"/>
        <dbReference type="EC" id="3.6.1.66"/>
    </reaction>
</comment>
<comment type="catalytic activity">
    <reaction evidence="1">
        <text>ITP + H2O = IMP + diphosphate + H(+)</text>
        <dbReference type="Rhea" id="RHEA:29399"/>
        <dbReference type="ChEBI" id="CHEBI:15377"/>
        <dbReference type="ChEBI" id="CHEBI:15378"/>
        <dbReference type="ChEBI" id="CHEBI:33019"/>
        <dbReference type="ChEBI" id="CHEBI:58053"/>
        <dbReference type="ChEBI" id="CHEBI:61402"/>
        <dbReference type="EC" id="3.6.1.66"/>
    </reaction>
</comment>
<comment type="cofactor">
    <cofactor evidence="1">
        <name>Mg(2+)</name>
        <dbReference type="ChEBI" id="CHEBI:18420"/>
    </cofactor>
    <text evidence="1">Binds 1 Mg(2+) ion per subunit.</text>
</comment>
<comment type="subunit">
    <text evidence="1">Homodimer.</text>
</comment>
<comment type="similarity">
    <text evidence="1">Belongs to the HAM1 NTPase family.</text>
</comment>
<organism>
    <name type="scientific">Borrelia garinii subsp. bavariensis (strain ATCC BAA-2496 / DSM 23469 / PBi)</name>
    <name type="common">Borreliella bavariensis</name>
    <dbReference type="NCBI Taxonomy" id="290434"/>
    <lineage>
        <taxon>Bacteria</taxon>
        <taxon>Pseudomonadati</taxon>
        <taxon>Spirochaetota</taxon>
        <taxon>Spirochaetia</taxon>
        <taxon>Spirochaetales</taxon>
        <taxon>Borreliaceae</taxon>
        <taxon>Borreliella</taxon>
    </lineage>
</organism>
<keyword id="KW-0378">Hydrolase</keyword>
<keyword id="KW-0460">Magnesium</keyword>
<keyword id="KW-0479">Metal-binding</keyword>
<keyword id="KW-0546">Nucleotide metabolism</keyword>
<keyword id="KW-0547">Nucleotide-binding</keyword>
<reference key="1">
    <citation type="journal article" date="2004" name="Nucleic Acids Res.">
        <title>Comparative analysis of the Borrelia garinii genome.</title>
        <authorList>
            <person name="Gloeckner G."/>
            <person name="Lehmann R."/>
            <person name="Romualdi A."/>
            <person name="Pradella S."/>
            <person name="Schulte-Spechtel U."/>
            <person name="Schilhabel M."/>
            <person name="Wilske B."/>
            <person name="Suehnel J."/>
            <person name="Platzer M."/>
        </authorList>
    </citation>
    <scope>NUCLEOTIDE SEQUENCE [LARGE SCALE GENOMIC DNA]</scope>
    <source>
        <strain>ATCC BAA-2496 / DSM 23469 / PBi</strain>
    </source>
</reference>
<evidence type="ECO:0000255" key="1">
    <source>
        <dbReference type="HAMAP-Rule" id="MF_01405"/>
    </source>
</evidence>
<sequence length="201" mass="23160">MKTLFFATTNENKINEVKNILDMPNLNLVVPKNFNIKETGTTFKENSLLKAKALFAILNKNQNVFGEDSGLCIEALNLEPGIYSKRYDTYKLCKKLSTNEKNQLILDLMKNEKNRKAYFICNISYISKDRQILNFEGIIKGEIALSLNDDKNYGFGYDSIFLTKNNKKLSDLTLEEKNKISHRGIAFSKFKKFLLKSLFNN</sequence>
<name>IXTPA_BORGP</name>
<dbReference type="EC" id="3.6.1.66" evidence="1"/>
<dbReference type="EMBL" id="CP000013">
    <property type="protein sequence ID" value="AAU07103.1"/>
    <property type="molecule type" value="Genomic_DNA"/>
</dbReference>
<dbReference type="SMR" id="Q662B8"/>
<dbReference type="GeneID" id="45161039"/>
<dbReference type="KEGG" id="bga:BG0249"/>
<dbReference type="eggNOG" id="COG0127">
    <property type="taxonomic scope" value="Bacteria"/>
</dbReference>
<dbReference type="HOGENOM" id="CLU_082080_0_2_12"/>
<dbReference type="OrthoDB" id="9807456at2"/>
<dbReference type="Proteomes" id="UP000002276">
    <property type="component" value="Chromosome"/>
</dbReference>
<dbReference type="GO" id="GO:0005829">
    <property type="term" value="C:cytosol"/>
    <property type="evidence" value="ECO:0007669"/>
    <property type="project" value="TreeGrafter"/>
</dbReference>
<dbReference type="GO" id="GO:0035870">
    <property type="term" value="F:dITP diphosphatase activity"/>
    <property type="evidence" value="ECO:0007669"/>
    <property type="project" value="RHEA"/>
</dbReference>
<dbReference type="GO" id="GO:0036220">
    <property type="term" value="F:ITP diphosphatase activity"/>
    <property type="evidence" value="ECO:0007669"/>
    <property type="project" value="UniProtKB-EC"/>
</dbReference>
<dbReference type="GO" id="GO:0046872">
    <property type="term" value="F:metal ion binding"/>
    <property type="evidence" value="ECO:0007669"/>
    <property type="project" value="UniProtKB-KW"/>
</dbReference>
<dbReference type="GO" id="GO:0000166">
    <property type="term" value="F:nucleotide binding"/>
    <property type="evidence" value="ECO:0007669"/>
    <property type="project" value="UniProtKB-KW"/>
</dbReference>
<dbReference type="GO" id="GO:0017111">
    <property type="term" value="F:ribonucleoside triphosphate phosphatase activity"/>
    <property type="evidence" value="ECO:0007669"/>
    <property type="project" value="InterPro"/>
</dbReference>
<dbReference type="GO" id="GO:0036222">
    <property type="term" value="F:XTP diphosphatase activity"/>
    <property type="evidence" value="ECO:0007669"/>
    <property type="project" value="RHEA"/>
</dbReference>
<dbReference type="GO" id="GO:0009117">
    <property type="term" value="P:nucleotide metabolic process"/>
    <property type="evidence" value="ECO:0007669"/>
    <property type="project" value="UniProtKB-KW"/>
</dbReference>
<dbReference type="GO" id="GO:0009146">
    <property type="term" value="P:purine nucleoside triphosphate catabolic process"/>
    <property type="evidence" value="ECO:0007669"/>
    <property type="project" value="UniProtKB-UniRule"/>
</dbReference>
<dbReference type="CDD" id="cd00515">
    <property type="entry name" value="HAM1"/>
    <property type="match status" value="1"/>
</dbReference>
<dbReference type="FunFam" id="3.90.950.10:FF:000001">
    <property type="entry name" value="dITP/XTP pyrophosphatase"/>
    <property type="match status" value="1"/>
</dbReference>
<dbReference type="Gene3D" id="3.90.950.10">
    <property type="match status" value="1"/>
</dbReference>
<dbReference type="HAMAP" id="MF_01405">
    <property type="entry name" value="Non_canon_purine_NTPase"/>
    <property type="match status" value="1"/>
</dbReference>
<dbReference type="InterPro" id="IPR020922">
    <property type="entry name" value="dITP/XTP_pyrophosphatase"/>
</dbReference>
<dbReference type="InterPro" id="IPR029001">
    <property type="entry name" value="ITPase-like_fam"/>
</dbReference>
<dbReference type="InterPro" id="IPR002637">
    <property type="entry name" value="RdgB/HAM1"/>
</dbReference>
<dbReference type="NCBIfam" id="NF011400">
    <property type="entry name" value="PRK14825.1"/>
    <property type="match status" value="1"/>
</dbReference>
<dbReference type="NCBIfam" id="TIGR00042">
    <property type="entry name" value="RdgB/HAM1 family non-canonical purine NTP pyrophosphatase"/>
    <property type="match status" value="1"/>
</dbReference>
<dbReference type="PANTHER" id="PTHR11067:SF9">
    <property type="entry name" value="INOSINE TRIPHOSPHATE PYROPHOSPHATASE"/>
    <property type="match status" value="1"/>
</dbReference>
<dbReference type="PANTHER" id="PTHR11067">
    <property type="entry name" value="INOSINE TRIPHOSPHATE PYROPHOSPHATASE/HAM1 PROTEIN"/>
    <property type="match status" value="1"/>
</dbReference>
<dbReference type="Pfam" id="PF01725">
    <property type="entry name" value="Ham1p_like"/>
    <property type="match status" value="1"/>
</dbReference>
<dbReference type="SUPFAM" id="SSF52972">
    <property type="entry name" value="ITPase-like"/>
    <property type="match status" value="1"/>
</dbReference>
<protein>
    <recommendedName>
        <fullName evidence="1">dITP/XTP pyrophosphatase</fullName>
        <ecNumber evidence="1">3.6.1.66</ecNumber>
    </recommendedName>
    <alternativeName>
        <fullName evidence="1">Non-canonical purine NTP pyrophosphatase</fullName>
    </alternativeName>
    <alternativeName>
        <fullName evidence="1">Non-standard purine NTP pyrophosphatase</fullName>
    </alternativeName>
    <alternativeName>
        <fullName evidence="1">Nucleoside-triphosphate diphosphatase</fullName>
    </alternativeName>
    <alternativeName>
        <fullName evidence="1">Nucleoside-triphosphate pyrophosphatase</fullName>
        <shortName evidence="1">NTPase</shortName>
    </alternativeName>
</protein>
<feature type="chain" id="PRO_0000178137" description="dITP/XTP pyrophosphatase">
    <location>
        <begin position="1"/>
        <end position="201"/>
    </location>
</feature>
<feature type="active site" description="Proton acceptor" evidence="1">
    <location>
        <position position="68"/>
    </location>
</feature>
<feature type="binding site" evidence="1">
    <location>
        <begin position="8"/>
        <end position="13"/>
    </location>
    <ligand>
        <name>substrate</name>
    </ligand>
</feature>
<feature type="binding site" evidence="1">
    <location>
        <position position="68"/>
    </location>
    <ligand>
        <name>Mg(2+)</name>
        <dbReference type="ChEBI" id="CHEBI:18420"/>
    </ligand>
</feature>
<feature type="binding site" evidence="1">
    <location>
        <position position="69"/>
    </location>
    <ligand>
        <name>substrate</name>
    </ligand>
</feature>
<feature type="binding site" evidence="1">
    <location>
        <begin position="155"/>
        <end position="158"/>
    </location>
    <ligand>
        <name>substrate</name>
    </ligand>
</feature>
<feature type="binding site" evidence="1">
    <location>
        <position position="177"/>
    </location>
    <ligand>
        <name>substrate</name>
    </ligand>
</feature>
<feature type="binding site" evidence="1">
    <location>
        <begin position="182"/>
        <end position="183"/>
    </location>
    <ligand>
        <name>substrate</name>
    </ligand>
</feature>